<name>TLP3_TAXBA</name>
<accession>P85341</accession>
<dbReference type="GO" id="GO:0005576">
    <property type="term" value="C:extracellular region"/>
    <property type="evidence" value="ECO:0007669"/>
    <property type="project" value="UniProtKB-KW"/>
</dbReference>
<proteinExistence type="evidence at protein level"/>
<sequence length="10" mass="1093">ITCLSDINSK</sequence>
<protein>
    <recommendedName>
        <fullName>Thaumatin-like protein 3</fullName>
    </recommendedName>
</protein>
<feature type="chain" id="PRO_0000314649" description="Thaumatin-like protein 3">
    <location>
        <begin position="1" status="less than"/>
        <end position="10" status="greater than"/>
    </location>
</feature>
<feature type="disulfide bond" evidence="1">
    <location>
        <begin position="3"/>
        <end status="unknown"/>
    </location>
</feature>
<feature type="non-terminal residue" evidence="4">
    <location>
        <position position="1"/>
    </location>
</feature>
<feature type="non-terminal residue" evidence="4">
    <location>
        <position position="10"/>
    </location>
</feature>
<organism>
    <name type="scientific">Taxus baccata</name>
    <name type="common">English yew</name>
    <dbReference type="NCBI Taxonomy" id="25629"/>
    <lineage>
        <taxon>Eukaryota</taxon>
        <taxon>Viridiplantae</taxon>
        <taxon>Streptophyta</taxon>
        <taxon>Embryophyta</taxon>
        <taxon>Tracheophyta</taxon>
        <taxon>Spermatophyta</taxon>
        <taxon>Pinopsida</taxon>
        <taxon>Pinidae</taxon>
        <taxon>Conifers II</taxon>
        <taxon>Cupressales</taxon>
        <taxon>Taxaceae</taxon>
        <taxon>Taxus</taxon>
    </lineage>
</organism>
<comment type="subcellular location">
    <subcellularLocation>
        <location evidence="3">Secreted</location>
        <location evidence="3">Cell wall</location>
    </subcellularLocation>
</comment>
<comment type="similarity">
    <text evidence="2">Belongs to the thaumatin family.</text>
</comment>
<evidence type="ECO:0000250" key="1">
    <source>
        <dbReference type="UniProtKB" id="P33679"/>
    </source>
</evidence>
<evidence type="ECO:0000255" key="2"/>
<evidence type="ECO:0000269" key="3">
    <source>
    </source>
</evidence>
<evidence type="ECO:0000303" key="4">
    <source>
    </source>
</evidence>
<evidence type="ECO:0000305" key="5"/>
<keyword id="KW-0134">Cell wall</keyword>
<keyword id="KW-0903">Direct protein sequencing</keyword>
<keyword id="KW-1015">Disulfide bond</keyword>
<keyword id="KW-0964">Secreted</keyword>
<reference evidence="5" key="1">
    <citation type="journal article" date="2009" name="J. Plant Physiol.">
        <title>Analysis of the soluble cell wall proteome of gymnosperms.</title>
        <authorList>
            <person name="Uzal E.N."/>
            <person name="Gomez-Ros L.V."/>
            <person name="Hernandez J.A."/>
            <person name="Pedreno M.A."/>
            <person name="Cuello J."/>
            <person name="Ros Barcelo A."/>
        </authorList>
    </citation>
    <scope>PROTEIN SEQUENCE</scope>
    <scope>SUBCELLULAR LOCATION</scope>
    <source>
        <strain evidence="3">PC-1008</strain>
        <tissue evidence="3">Callus</tissue>
    </source>
</reference>